<gene>
    <name evidence="1" type="primary">rppH</name>
    <name evidence="1" type="synonym">nudH</name>
    <name type="ordered locus">EcHS_A2976</name>
</gene>
<feature type="chain" id="PRO_1000059300" description="RNA pyrophosphohydrolase">
    <location>
        <begin position="1"/>
        <end position="176"/>
    </location>
</feature>
<feature type="domain" description="Nudix hydrolase" evidence="1">
    <location>
        <begin position="6"/>
        <end position="149"/>
    </location>
</feature>
<feature type="short sequence motif" description="Nudix box">
    <location>
        <begin position="38"/>
        <end position="59"/>
    </location>
</feature>
<reference key="1">
    <citation type="journal article" date="2008" name="J. Bacteriol.">
        <title>The pangenome structure of Escherichia coli: comparative genomic analysis of E. coli commensal and pathogenic isolates.</title>
        <authorList>
            <person name="Rasko D.A."/>
            <person name="Rosovitz M.J."/>
            <person name="Myers G.S.A."/>
            <person name="Mongodin E.F."/>
            <person name="Fricke W.F."/>
            <person name="Gajer P."/>
            <person name="Crabtree J."/>
            <person name="Sebaihia M."/>
            <person name="Thomson N.R."/>
            <person name="Chaudhuri R."/>
            <person name="Henderson I.R."/>
            <person name="Sperandio V."/>
            <person name="Ravel J."/>
        </authorList>
    </citation>
    <scope>NUCLEOTIDE SEQUENCE [LARGE SCALE GENOMIC DNA]</scope>
    <source>
        <strain>HS</strain>
    </source>
</reference>
<proteinExistence type="inferred from homology"/>
<organism>
    <name type="scientific">Escherichia coli O9:H4 (strain HS)</name>
    <dbReference type="NCBI Taxonomy" id="331112"/>
    <lineage>
        <taxon>Bacteria</taxon>
        <taxon>Pseudomonadati</taxon>
        <taxon>Pseudomonadota</taxon>
        <taxon>Gammaproteobacteria</taxon>
        <taxon>Enterobacterales</taxon>
        <taxon>Enterobacteriaceae</taxon>
        <taxon>Escherichia</taxon>
    </lineage>
</organism>
<comment type="function">
    <text evidence="1">Accelerates the degradation of transcripts by removing pyrophosphate from the 5'-end of triphosphorylated RNA, leading to a more labile monophosphorylated state that can stimulate subsequent ribonuclease cleavage.</text>
</comment>
<comment type="cofactor">
    <cofactor evidence="1">
        <name>a divalent metal cation</name>
        <dbReference type="ChEBI" id="CHEBI:60240"/>
    </cofactor>
</comment>
<comment type="similarity">
    <text evidence="1">Belongs to the Nudix hydrolase family. RppH subfamily.</text>
</comment>
<evidence type="ECO:0000255" key="1">
    <source>
        <dbReference type="HAMAP-Rule" id="MF_00298"/>
    </source>
</evidence>
<keyword id="KW-0378">Hydrolase</keyword>
<dbReference type="EC" id="3.6.1.-" evidence="1"/>
<dbReference type="EMBL" id="CP000802">
    <property type="protein sequence ID" value="ABV07217.1"/>
    <property type="molecule type" value="Genomic_DNA"/>
</dbReference>
<dbReference type="RefSeq" id="WP_000564489.1">
    <property type="nucleotide sequence ID" value="NC_009800.1"/>
</dbReference>
<dbReference type="BMRB" id="A8A3W3"/>
<dbReference type="SMR" id="A8A3W3"/>
<dbReference type="GeneID" id="75203778"/>
<dbReference type="KEGG" id="ecx:EcHS_A2976"/>
<dbReference type="HOGENOM" id="CLU_087195_3_2_6"/>
<dbReference type="GO" id="GO:0005737">
    <property type="term" value="C:cytoplasm"/>
    <property type="evidence" value="ECO:0007669"/>
    <property type="project" value="TreeGrafter"/>
</dbReference>
<dbReference type="GO" id="GO:0034353">
    <property type="term" value="F:mRNA 5'-diphosphatase activity"/>
    <property type="evidence" value="ECO:0007669"/>
    <property type="project" value="TreeGrafter"/>
</dbReference>
<dbReference type="GO" id="GO:0006402">
    <property type="term" value="P:mRNA catabolic process"/>
    <property type="evidence" value="ECO:0007669"/>
    <property type="project" value="TreeGrafter"/>
</dbReference>
<dbReference type="CDD" id="cd03671">
    <property type="entry name" value="NUDIX_Ap4A_hydrolase_plant_like"/>
    <property type="match status" value="1"/>
</dbReference>
<dbReference type="FunFam" id="3.90.79.10:FF:000001">
    <property type="entry name" value="RNA pyrophosphohydrolase"/>
    <property type="match status" value="1"/>
</dbReference>
<dbReference type="Gene3D" id="3.90.79.10">
    <property type="entry name" value="Nucleoside Triphosphate Pyrophosphohydrolase"/>
    <property type="match status" value="1"/>
</dbReference>
<dbReference type="HAMAP" id="MF_00298">
    <property type="entry name" value="Nudix_RppH"/>
    <property type="match status" value="1"/>
</dbReference>
<dbReference type="InterPro" id="IPR020476">
    <property type="entry name" value="Nudix_hydrolase"/>
</dbReference>
<dbReference type="InterPro" id="IPR015797">
    <property type="entry name" value="NUDIX_hydrolase-like_dom_sf"/>
</dbReference>
<dbReference type="InterPro" id="IPR020084">
    <property type="entry name" value="NUDIX_hydrolase_CS"/>
</dbReference>
<dbReference type="InterPro" id="IPR000086">
    <property type="entry name" value="NUDIX_hydrolase_dom"/>
</dbReference>
<dbReference type="InterPro" id="IPR022927">
    <property type="entry name" value="RppH"/>
</dbReference>
<dbReference type="NCBIfam" id="NF001934">
    <property type="entry name" value="PRK00714.1-1"/>
    <property type="match status" value="1"/>
</dbReference>
<dbReference type="NCBIfam" id="NF001937">
    <property type="entry name" value="PRK00714.1-4"/>
    <property type="match status" value="1"/>
</dbReference>
<dbReference type="NCBIfam" id="NF001938">
    <property type="entry name" value="PRK00714.1-5"/>
    <property type="match status" value="1"/>
</dbReference>
<dbReference type="PANTHER" id="PTHR23114">
    <property type="entry name" value="M7GPPPN-MRNA HYDROLASE"/>
    <property type="match status" value="1"/>
</dbReference>
<dbReference type="PANTHER" id="PTHR23114:SF17">
    <property type="entry name" value="M7GPPPN-MRNA HYDROLASE"/>
    <property type="match status" value="1"/>
</dbReference>
<dbReference type="Pfam" id="PF00293">
    <property type="entry name" value="NUDIX"/>
    <property type="match status" value="1"/>
</dbReference>
<dbReference type="PRINTS" id="PR00502">
    <property type="entry name" value="NUDIXFAMILY"/>
</dbReference>
<dbReference type="SUPFAM" id="SSF55811">
    <property type="entry name" value="Nudix"/>
    <property type="match status" value="1"/>
</dbReference>
<dbReference type="PROSITE" id="PS51462">
    <property type="entry name" value="NUDIX"/>
    <property type="match status" value="1"/>
</dbReference>
<dbReference type="PROSITE" id="PS00893">
    <property type="entry name" value="NUDIX_BOX"/>
    <property type="match status" value="1"/>
</dbReference>
<name>RPPH_ECOHS</name>
<sequence length="176" mass="20795">MIDDDGYRPNVGIVICNRQGQVMWARRFGQHSWQFPQGGINPGESAEQAMYRELFEEVGLSRKDVRILASTRNWLRYKLPKRLVRWDTKPVCIGQKQKWFLLQLVSGDAEINMQTSSTPEFDGWRWVSYWYPVRQVVSFKRDVYRRVMKEFASVVMSLQENTPKPQNASAYRRKRG</sequence>
<protein>
    <recommendedName>
        <fullName evidence="1">RNA pyrophosphohydrolase</fullName>
        <ecNumber evidence="1">3.6.1.-</ecNumber>
    </recommendedName>
    <alternativeName>
        <fullName evidence="1">(Di)nucleoside polyphosphate hydrolase</fullName>
    </alternativeName>
</protein>
<accession>A8A3W3</accession>